<proteinExistence type="evidence at protein level"/>
<protein>
    <recommendedName>
        <fullName>Phospholipase A2</fullName>
        <shortName>PLA2</shortName>
        <ecNumber evidence="3">3.1.1.4</ecNumber>
    </recommendedName>
</protein>
<reference key="1">
    <citation type="journal article" date="2012" name="J. Proteome Res.">
        <title>Venomic and transcriptomic analysis of centipede Scolopendra subspinipes dehaani.</title>
        <authorList>
            <person name="Liu Z.C."/>
            <person name="Zhang R."/>
            <person name="Zhao F."/>
            <person name="Chen Z.M."/>
            <person name="Liu H.W."/>
            <person name="Wang Y.J."/>
            <person name="Jiang P."/>
            <person name="Zhang Y."/>
            <person name="Wu Y."/>
            <person name="Ding J.P."/>
            <person name="Lee W.H."/>
            <person name="Zhang Y."/>
        </authorList>
    </citation>
    <scope>PROTEIN SEQUENCE</scope>
    <scope>SUBCELLULAR LOCATION</scope>
    <scope>MASS SPECTROMETRY</scope>
    <scope>FUNCTION</scope>
    <scope>CATALYTIC ACTIVITY</scope>
    <scope>BIOPHYSICOCHEMICAL PROPERTIES</scope>
    <source>
        <tissue>Venom</tissue>
    </source>
</reference>
<organism>
    <name type="scientific">Scolopendra dehaani</name>
    <name type="common">Thai centipede</name>
    <name type="synonym">Scolopendra subspinipes dehaani</name>
    <dbReference type="NCBI Taxonomy" id="2609776"/>
    <lineage>
        <taxon>Eukaryota</taxon>
        <taxon>Metazoa</taxon>
        <taxon>Ecdysozoa</taxon>
        <taxon>Arthropoda</taxon>
        <taxon>Myriapoda</taxon>
        <taxon>Chilopoda</taxon>
        <taxon>Pleurostigmophora</taxon>
        <taxon>Scolopendromorpha</taxon>
        <taxon>Scolopendridae</taxon>
        <taxon>Scolopendra</taxon>
    </lineage>
</organism>
<comment type="function">
    <text evidence="4">PLA2 catalyzes the calcium-dependent hydrolysis of the 2-acyl groups in 3-sn-phosphoglycerides.</text>
</comment>
<comment type="catalytic activity">
    <reaction evidence="4">
        <text>a 1,2-diacyl-sn-glycero-3-phosphocholine + H2O = a 1-acyl-sn-glycero-3-phosphocholine + a fatty acid + H(+)</text>
        <dbReference type="Rhea" id="RHEA:15801"/>
        <dbReference type="ChEBI" id="CHEBI:15377"/>
        <dbReference type="ChEBI" id="CHEBI:15378"/>
        <dbReference type="ChEBI" id="CHEBI:28868"/>
        <dbReference type="ChEBI" id="CHEBI:57643"/>
        <dbReference type="ChEBI" id="CHEBI:58168"/>
        <dbReference type="EC" id="3.1.1.4"/>
    </reaction>
</comment>
<comment type="cofactor">
    <cofactor evidence="2">
        <name>Ca(2+)</name>
        <dbReference type="ChEBI" id="CHEBI:29108"/>
    </cofactor>
    <text evidence="1">Binds 1 Ca(2+) ion.</text>
</comment>
<comment type="biophysicochemical properties">
    <kinetics>
        <Vmax evidence="4">840.0 uM/min/mg enzyme for egg yolk</Vmax>
    </kinetics>
</comment>
<comment type="subcellular location">
    <subcellularLocation>
        <location evidence="4">Secreted</location>
    </subcellularLocation>
</comment>
<comment type="tissue specificity">
    <text evidence="6">Expressed by the venom gland.</text>
</comment>
<comment type="mass spectrometry" mass="13081.2" method="MALDI" evidence="4"/>
<comment type="similarity">
    <text evidence="5">Belongs to the phospholipase A2 family.</text>
</comment>
<name>PA22_SCODE</name>
<feature type="chain" id="PRO_0000446682" description="Phospholipase A2">
    <location>
        <begin position="1"/>
        <end position="28" status="greater than"/>
    </location>
</feature>
<feature type="binding site" evidence="2">
    <location>
        <position position="28"/>
    </location>
    <ligand>
        <name>Ca(2+)</name>
        <dbReference type="ChEBI" id="CHEBI:29108"/>
    </ligand>
</feature>
<feature type="disulfide bond" evidence="5">
    <location>
        <begin position="27"/>
        <end status="unknown"/>
    </location>
</feature>
<feature type="non-terminal residue">
    <location>
        <position position="28"/>
    </location>
</feature>
<sequence length="28" mass="3100">SLANFLSMTLTAAKRKPKEYDGYGNYCG</sequence>
<accession>P0DPT8</accession>
<keyword id="KW-0106">Calcium</keyword>
<keyword id="KW-0903">Direct protein sequencing</keyword>
<keyword id="KW-1015">Disulfide bond</keyword>
<keyword id="KW-0378">Hydrolase</keyword>
<keyword id="KW-0442">Lipid degradation</keyword>
<keyword id="KW-0443">Lipid metabolism</keyword>
<keyword id="KW-0479">Metal-binding</keyword>
<keyword id="KW-0964">Secreted</keyword>
<dbReference type="EC" id="3.1.1.4" evidence="3"/>
<dbReference type="SMR" id="P0DPT8"/>
<dbReference type="GO" id="GO:0005576">
    <property type="term" value="C:extracellular region"/>
    <property type="evidence" value="ECO:0007669"/>
    <property type="project" value="UniProtKB-SubCell"/>
</dbReference>
<dbReference type="GO" id="GO:0046872">
    <property type="term" value="F:metal ion binding"/>
    <property type="evidence" value="ECO:0007669"/>
    <property type="project" value="UniProtKB-KW"/>
</dbReference>
<dbReference type="GO" id="GO:0004623">
    <property type="term" value="F:phospholipase A2 activity"/>
    <property type="evidence" value="ECO:0007669"/>
    <property type="project" value="UniProtKB-EC"/>
</dbReference>
<dbReference type="GO" id="GO:0016042">
    <property type="term" value="P:lipid catabolic process"/>
    <property type="evidence" value="ECO:0007669"/>
    <property type="project" value="UniProtKB-KW"/>
</dbReference>
<evidence type="ECO:0000250" key="1"/>
<evidence type="ECO:0000250" key="2">
    <source>
        <dbReference type="UniProtKB" id="P14555"/>
    </source>
</evidence>
<evidence type="ECO:0000255" key="3">
    <source>
        <dbReference type="PROSITE-ProRule" id="PRU10035"/>
    </source>
</evidence>
<evidence type="ECO:0000269" key="4">
    <source>
    </source>
</evidence>
<evidence type="ECO:0000305" key="5"/>
<evidence type="ECO:0000305" key="6">
    <source>
    </source>
</evidence>